<gene>
    <name evidence="1" type="primary">rppH</name>
    <name evidence="1" type="synonym">nudH</name>
    <name type="ordered locus">Dshi_0092</name>
</gene>
<name>RPPH_DINSH</name>
<protein>
    <recommendedName>
        <fullName evidence="1">RNA pyrophosphohydrolase</fullName>
        <ecNumber evidence="1">3.6.1.-</ecNumber>
    </recommendedName>
    <alternativeName>
        <fullName evidence="1">(Di)nucleoside polyphosphate hydrolase</fullName>
    </alternativeName>
</protein>
<accession>A8LKJ8</accession>
<keyword id="KW-0378">Hydrolase</keyword>
<keyword id="KW-1185">Reference proteome</keyword>
<organism>
    <name type="scientific">Dinoroseobacter shibae (strain DSM 16493 / NCIMB 14021 / DFL 12)</name>
    <dbReference type="NCBI Taxonomy" id="398580"/>
    <lineage>
        <taxon>Bacteria</taxon>
        <taxon>Pseudomonadati</taxon>
        <taxon>Pseudomonadota</taxon>
        <taxon>Alphaproteobacteria</taxon>
        <taxon>Rhodobacterales</taxon>
        <taxon>Roseobacteraceae</taxon>
        <taxon>Dinoroseobacter</taxon>
    </lineage>
</organism>
<evidence type="ECO:0000255" key="1">
    <source>
        <dbReference type="HAMAP-Rule" id="MF_00298"/>
    </source>
</evidence>
<proteinExistence type="inferred from homology"/>
<dbReference type="EC" id="3.6.1.-" evidence="1"/>
<dbReference type="EMBL" id="CP000830">
    <property type="protein sequence ID" value="ABV91841.1"/>
    <property type="molecule type" value="Genomic_DNA"/>
</dbReference>
<dbReference type="RefSeq" id="WP_012176774.1">
    <property type="nucleotide sequence ID" value="NC_009952.1"/>
</dbReference>
<dbReference type="SMR" id="A8LKJ8"/>
<dbReference type="STRING" id="398580.Dshi_0092"/>
<dbReference type="KEGG" id="dsh:Dshi_0092"/>
<dbReference type="eggNOG" id="COG1051">
    <property type="taxonomic scope" value="Bacteria"/>
</dbReference>
<dbReference type="HOGENOM" id="CLU_087195_3_0_5"/>
<dbReference type="OrthoDB" id="9816040at2"/>
<dbReference type="Proteomes" id="UP000006833">
    <property type="component" value="Chromosome"/>
</dbReference>
<dbReference type="GO" id="GO:0034432">
    <property type="term" value="F:bis(5'-adenosyl)-pentaphosphatase activity"/>
    <property type="evidence" value="ECO:0007669"/>
    <property type="project" value="TreeGrafter"/>
</dbReference>
<dbReference type="GO" id="GO:0008893">
    <property type="term" value="F:guanosine-3',5'-bis(diphosphate) 3'-diphosphatase activity"/>
    <property type="evidence" value="ECO:0007669"/>
    <property type="project" value="TreeGrafter"/>
</dbReference>
<dbReference type="GO" id="GO:0006753">
    <property type="term" value="P:nucleoside phosphate metabolic process"/>
    <property type="evidence" value="ECO:0007669"/>
    <property type="project" value="TreeGrafter"/>
</dbReference>
<dbReference type="GO" id="GO:0019693">
    <property type="term" value="P:ribose phosphate metabolic process"/>
    <property type="evidence" value="ECO:0007669"/>
    <property type="project" value="TreeGrafter"/>
</dbReference>
<dbReference type="CDD" id="cd03671">
    <property type="entry name" value="NUDIX_Ap4A_hydrolase_plant_like"/>
    <property type="match status" value="1"/>
</dbReference>
<dbReference type="Gene3D" id="3.90.79.10">
    <property type="entry name" value="Nucleoside Triphosphate Pyrophosphohydrolase"/>
    <property type="match status" value="1"/>
</dbReference>
<dbReference type="HAMAP" id="MF_00298">
    <property type="entry name" value="Nudix_RppH"/>
    <property type="match status" value="1"/>
</dbReference>
<dbReference type="InterPro" id="IPR020476">
    <property type="entry name" value="Nudix_hydrolase"/>
</dbReference>
<dbReference type="InterPro" id="IPR015797">
    <property type="entry name" value="NUDIX_hydrolase-like_dom_sf"/>
</dbReference>
<dbReference type="InterPro" id="IPR020084">
    <property type="entry name" value="NUDIX_hydrolase_CS"/>
</dbReference>
<dbReference type="InterPro" id="IPR000086">
    <property type="entry name" value="NUDIX_hydrolase_dom"/>
</dbReference>
<dbReference type="InterPro" id="IPR022927">
    <property type="entry name" value="RppH"/>
</dbReference>
<dbReference type="NCBIfam" id="NF001936">
    <property type="entry name" value="PRK00714.1-3"/>
    <property type="match status" value="1"/>
</dbReference>
<dbReference type="NCBIfam" id="NF001938">
    <property type="entry name" value="PRK00714.1-5"/>
    <property type="match status" value="1"/>
</dbReference>
<dbReference type="PANTHER" id="PTHR11839:SF22">
    <property type="entry name" value="NUDIX HYDROLASE 26, CHLOROPLASTIC"/>
    <property type="match status" value="1"/>
</dbReference>
<dbReference type="PANTHER" id="PTHR11839">
    <property type="entry name" value="UDP/ADP-SUGAR PYROPHOSPHATASE"/>
    <property type="match status" value="1"/>
</dbReference>
<dbReference type="Pfam" id="PF00293">
    <property type="entry name" value="NUDIX"/>
    <property type="match status" value="1"/>
</dbReference>
<dbReference type="PRINTS" id="PR00502">
    <property type="entry name" value="NUDIXFAMILY"/>
</dbReference>
<dbReference type="SUPFAM" id="SSF55811">
    <property type="entry name" value="Nudix"/>
    <property type="match status" value="1"/>
</dbReference>
<dbReference type="PROSITE" id="PS51462">
    <property type="entry name" value="NUDIX"/>
    <property type="match status" value="1"/>
</dbReference>
<dbReference type="PROSITE" id="PS00893">
    <property type="entry name" value="NUDIX_BOX"/>
    <property type="match status" value="1"/>
</dbReference>
<feature type="chain" id="PRO_1000078960" description="RNA pyrophosphohydrolase">
    <location>
        <begin position="1"/>
        <end position="160"/>
    </location>
</feature>
<feature type="domain" description="Nudix hydrolase" evidence="1">
    <location>
        <begin position="10"/>
        <end position="154"/>
    </location>
</feature>
<feature type="short sequence motif" description="Nudix box">
    <location>
        <begin position="44"/>
        <end position="65"/>
    </location>
</feature>
<comment type="function">
    <text evidence="1">Accelerates the degradation of transcripts by removing pyrophosphate from the 5'-end of triphosphorylated RNA, leading to a more labile monophosphorylated state that can stimulate subsequent ribonuclease cleavage.</text>
</comment>
<comment type="cofactor">
    <cofactor evidence="1">
        <name>a divalent metal cation</name>
        <dbReference type="ChEBI" id="CHEBI:60240"/>
    </cofactor>
</comment>
<comment type="similarity">
    <text evidence="1">Belongs to the Nudix hydrolase family. RppH subfamily.</text>
</comment>
<sequence>MTPDDIAALPYRKCVGVVLWDGAGRVFTGQRYDSELPAWQMPQGGIEDGEDARTAALRELVEETGVAVEKVEVLAETPDWIKYDLPPEIVPRIWKGRYKGQAQRWVLMKFLGSDADINIETKHPEFSEWRWLEPASVLDSIVPFKRDVYEQVFDAFSDWL</sequence>
<reference key="1">
    <citation type="journal article" date="2010" name="ISME J.">
        <title>The complete genome sequence of the algal symbiont Dinoroseobacter shibae: a hitchhiker's guide to life in the sea.</title>
        <authorList>
            <person name="Wagner-Dobler I."/>
            <person name="Ballhausen B."/>
            <person name="Berger M."/>
            <person name="Brinkhoff T."/>
            <person name="Buchholz I."/>
            <person name="Bunk B."/>
            <person name="Cypionka H."/>
            <person name="Daniel R."/>
            <person name="Drepper T."/>
            <person name="Gerdts G."/>
            <person name="Hahnke S."/>
            <person name="Han C."/>
            <person name="Jahn D."/>
            <person name="Kalhoefer D."/>
            <person name="Kiss H."/>
            <person name="Klenk H.P."/>
            <person name="Kyrpides N."/>
            <person name="Liebl W."/>
            <person name="Liesegang H."/>
            <person name="Meincke L."/>
            <person name="Pati A."/>
            <person name="Petersen J."/>
            <person name="Piekarski T."/>
            <person name="Pommerenke C."/>
            <person name="Pradella S."/>
            <person name="Pukall R."/>
            <person name="Rabus R."/>
            <person name="Stackebrandt E."/>
            <person name="Thole S."/>
            <person name="Thompson L."/>
            <person name="Tielen P."/>
            <person name="Tomasch J."/>
            <person name="von Jan M."/>
            <person name="Wanphrut N."/>
            <person name="Wichels A."/>
            <person name="Zech H."/>
            <person name="Simon M."/>
        </authorList>
    </citation>
    <scope>NUCLEOTIDE SEQUENCE [LARGE SCALE GENOMIC DNA]</scope>
    <source>
        <strain>DSM 16493 / NCIMB 14021 / DFL 12</strain>
    </source>
</reference>